<reference key="1">
    <citation type="submission" date="2007-05" db="EMBL/GenBank/DDBJ databases">
        <title>Complete sequence of Thermotoga petrophila RKU-1.</title>
        <authorList>
            <consortium name="US DOE Joint Genome Institute"/>
            <person name="Copeland A."/>
            <person name="Lucas S."/>
            <person name="Lapidus A."/>
            <person name="Barry K."/>
            <person name="Glavina del Rio T."/>
            <person name="Dalin E."/>
            <person name="Tice H."/>
            <person name="Pitluck S."/>
            <person name="Sims D."/>
            <person name="Brettin T."/>
            <person name="Bruce D."/>
            <person name="Detter J.C."/>
            <person name="Han C."/>
            <person name="Tapia R."/>
            <person name="Schmutz J."/>
            <person name="Larimer F."/>
            <person name="Land M."/>
            <person name="Hauser L."/>
            <person name="Kyrpides N."/>
            <person name="Mikhailova N."/>
            <person name="Nelson K."/>
            <person name="Gogarten J.P."/>
            <person name="Noll K."/>
            <person name="Richardson P."/>
        </authorList>
    </citation>
    <scope>NUCLEOTIDE SEQUENCE [LARGE SCALE GENOMIC DNA]</scope>
    <source>
        <strain>ATCC BAA-488 / DSM 13995 / JCM 10881 / RKU-1</strain>
    </source>
</reference>
<evidence type="ECO:0000255" key="1">
    <source>
        <dbReference type="HAMAP-Rule" id="MF_00339"/>
    </source>
</evidence>
<gene>
    <name evidence="1" type="primary">pfkA</name>
    <name type="ordered locus">Tpet_0715</name>
</gene>
<keyword id="KW-0021">Allosteric enzyme</keyword>
<keyword id="KW-0067">ATP-binding</keyword>
<keyword id="KW-0963">Cytoplasm</keyword>
<keyword id="KW-0324">Glycolysis</keyword>
<keyword id="KW-0418">Kinase</keyword>
<keyword id="KW-0460">Magnesium</keyword>
<keyword id="KW-0479">Metal-binding</keyword>
<keyword id="KW-0547">Nucleotide-binding</keyword>
<keyword id="KW-0808">Transferase</keyword>
<organism>
    <name type="scientific">Thermotoga petrophila (strain ATCC BAA-488 / DSM 13995 / JCM 10881 / RKU-1)</name>
    <dbReference type="NCBI Taxonomy" id="390874"/>
    <lineage>
        <taxon>Bacteria</taxon>
        <taxon>Thermotogati</taxon>
        <taxon>Thermotogota</taxon>
        <taxon>Thermotogae</taxon>
        <taxon>Thermotogales</taxon>
        <taxon>Thermotogaceae</taxon>
        <taxon>Thermotoga</taxon>
    </lineage>
</organism>
<comment type="function">
    <text evidence="1">Catalyzes the phosphorylation of D-fructose 6-phosphate to fructose 1,6-bisphosphate by ATP, the first committing step of glycolysis.</text>
</comment>
<comment type="catalytic activity">
    <reaction evidence="1">
        <text>beta-D-fructose 6-phosphate + ATP = beta-D-fructose 1,6-bisphosphate + ADP + H(+)</text>
        <dbReference type="Rhea" id="RHEA:16109"/>
        <dbReference type="ChEBI" id="CHEBI:15378"/>
        <dbReference type="ChEBI" id="CHEBI:30616"/>
        <dbReference type="ChEBI" id="CHEBI:32966"/>
        <dbReference type="ChEBI" id="CHEBI:57634"/>
        <dbReference type="ChEBI" id="CHEBI:456216"/>
        <dbReference type="EC" id="2.7.1.11"/>
    </reaction>
</comment>
<comment type="cofactor">
    <cofactor evidence="1">
        <name>Mg(2+)</name>
        <dbReference type="ChEBI" id="CHEBI:18420"/>
    </cofactor>
</comment>
<comment type="activity regulation">
    <text evidence="1">Allosterically activated by ADP and other diphosphonucleosides, and allosterically inhibited by phosphoenolpyruvate.</text>
</comment>
<comment type="pathway">
    <text evidence="1">Carbohydrate degradation; glycolysis; D-glyceraldehyde 3-phosphate and glycerone phosphate from D-glucose: step 3/4.</text>
</comment>
<comment type="subunit">
    <text evidence="1">Homotetramer.</text>
</comment>
<comment type="subcellular location">
    <subcellularLocation>
        <location evidence="1">Cytoplasm</location>
    </subcellularLocation>
</comment>
<comment type="similarity">
    <text evidence="1">Belongs to the phosphofructokinase type A (PFKA) family. ATP-dependent PFK group I subfamily. Prokaryotic clade 'B1' sub-subfamily.</text>
</comment>
<name>PFKA_THEP1</name>
<sequence length="319" mass="34428">MKKIAVLTSGGDAPGMNAAVRAVVRYGVRHGLEVIGVRRGYSGLIDGDFVKLEYKDVAGITEKGGTILRTSRCEEFKTEEGRELAAKQIKKHGIEGLVVIGGEGSLTGAHLLYEEHKIPVVGIPATIDNDIGLTDMCIGVDTCLNTVMDAVQKLKDTASSHERAFIVEVMGRHSGYIALMAGLVTGAEAIIVPEIPVDYSQLADRILEERRRGKINSIIIVAEGAASAYTVARHLEYRIGYETRITILGHVQRGGSPTASDRRLALSMGVEAVDALLDGEVDVMIALQGNKLVRVPIMEALSTKKTIDKKLYEIAYMLS</sequence>
<dbReference type="EC" id="2.7.1.11" evidence="1"/>
<dbReference type="EMBL" id="CP000702">
    <property type="protein sequence ID" value="ABQ46735.1"/>
    <property type="molecule type" value="Genomic_DNA"/>
</dbReference>
<dbReference type="RefSeq" id="WP_011943318.1">
    <property type="nucleotide sequence ID" value="NC_009486.1"/>
</dbReference>
<dbReference type="SMR" id="A5IKL2"/>
<dbReference type="STRING" id="390874.Tpet_0715"/>
<dbReference type="KEGG" id="tpt:Tpet_0715"/>
<dbReference type="eggNOG" id="COG0205">
    <property type="taxonomic scope" value="Bacteria"/>
</dbReference>
<dbReference type="HOGENOM" id="CLU_020655_0_1_0"/>
<dbReference type="UniPathway" id="UPA00109">
    <property type="reaction ID" value="UER00182"/>
</dbReference>
<dbReference type="Proteomes" id="UP000006558">
    <property type="component" value="Chromosome"/>
</dbReference>
<dbReference type="GO" id="GO:0005945">
    <property type="term" value="C:6-phosphofructokinase complex"/>
    <property type="evidence" value="ECO:0007669"/>
    <property type="project" value="TreeGrafter"/>
</dbReference>
<dbReference type="GO" id="GO:0003872">
    <property type="term" value="F:6-phosphofructokinase activity"/>
    <property type="evidence" value="ECO:0007669"/>
    <property type="project" value="UniProtKB-UniRule"/>
</dbReference>
<dbReference type="GO" id="GO:0016208">
    <property type="term" value="F:AMP binding"/>
    <property type="evidence" value="ECO:0007669"/>
    <property type="project" value="TreeGrafter"/>
</dbReference>
<dbReference type="GO" id="GO:0005524">
    <property type="term" value="F:ATP binding"/>
    <property type="evidence" value="ECO:0007669"/>
    <property type="project" value="UniProtKB-KW"/>
</dbReference>
<dbReference type="GO" id="GO:0070095">
    <property type="term" value="F:fructose-6-phosphate binding"/>
    <property type="evidence" value="ECO:0007669"/>
    <property type="project" value="TreeGrafter"/>
</dbReference>
<dbReference type="GO" id="GO:0042802">
    <property type="term" value="F:identical protein binding"/>
    <property type="evidence" value="ECO:0007669"/>
    <property type="project" value="TreeGrafter"/>
</dbReference>
<dbReference type="GO" id="GO:0046872">
    <property type="term" value="F:metal ion binding"/>
    <property type="evidence" value="ECO:0007669"/>
    <property type="project" value="UniProtKB-KW"/>
</dbReference>
<dbReference type="GO" id="GO:0048029">
    <property type="term" value="F:monosaccharide binding"/>
    <property type="evidence" value="ECO:0007669"/>
    <property type="project" value="TreeGrafter"/>
</dbReference>
<dbReference type="GO" id="GO:0061621">
    <property type="term" value="P:canonical glycolysis"/>
    <property type="evidence" value="ECO:0007669"/>
    <property type="project" value="TreeGrafter"/>
</dbReference>
<dbReference type="GO" id="GO:0030388">
    <property type="term" value="P:fructose 1,6-bisphosphate metabolic process"/>
    <property type="evidence" value="ECO:0007669"/>
    <property type="project" value="TreeGrafter"/>
</dbReference>
<dbReference type="GO" id="GO:0006002">
    <property type="term" value="P:fructose 6-phosphate metabolic process"/>
    <property type="evidence" value="ECO:0007669"/>
    <property type="project" value="InterPro"/>
</dbReference>
<dbReference type="FunFam" id="3.40.50.450:FF:000001">
    <property type="entry name" value="ATP-dependent 6-phosphofructokinase"/>
    <property type="match status" value="1"/>
</dbReference>
<dbReference type="FunFam" id="3.40.50.460:FF:000002">
    <property type="entry name" value="ATP-dependent 6-phosphofructokinase"/>
    <property type="match status" value="1"/>
</dbReference>
<dbReference type="Gene3D" id="3.40.50.450">
    <property type="match status" value="1"/>
</dbReference>
<dbReference type="Gene3D" id="3.40.50.460">
    <property type="entry name" value="Phosphofructokinase domain"/>
    <property type="match status" value="1"/>
</dbReference>
<dbReference type="HAMAP" id="MF_00339">
    <property type="entry name" value="Phosphofructokinase_I_B1"/>
    <property type="match status" value="1"/>
</dbReference>
<dbReference type="InterPro" id="IPR022953">
    <property type="entry name" value="ATP_PFK"/>
</dbReference>
<dbReference type="InterPro" id="IPR012003">
    <property type="entry name" value="ATP_PFK_prok-type"/>
</dbReference>
<dbReference type="InterPro" id="IPR012828">
    <property type="entry name" value="PFKA_ATP_prok"/>
</dbReference>
<dbReference type="InterPro" id="IPR015912">
    <property type="entry name" value="Phosphofructokinase_CS"/>
</dbReference>
<dbReference type="InterPro" id="IPR000023">
    <property type="entry name" value="Phosphofructokinase_dom"/>
</dbReference>
<dbReference type="InterPro" id="IPR035966">
    <property type="entry name" value="PKF_sf"/>
</dbReference>
<dbReference type="NCBIfam" id="TIGR02482">
    <property type="entry name" value="PFKA_ATP"/>
    <property type="match status" value="1"/>
</dbReference>
<dbReference type="NCBIfam" id="NF002872">
    <property type="entry name" value="PRK03202.1"/>
    <property type="match status" value="1"/>
</dbReference>
<dbReference type="PANTHER" id="PTHR13697:SF4">
    <property type="entry name" value="ATP-DEPENDENT 6-PHOSPHOFRUCTOKINASE"/>
    <property type="match status" value="1"/>
</dbReference>
<dbReference type="PANTHER" id="PTHR13697">
    <property type="entry name" value="PHOSPHOFRUCTOKINASE"/>
    <property type="match status" value="1"/>
</dbReference>
<dbReference type="Pfam" id="PF00365">
    <property type="entry name" value="PFK"/>
    <property type="match status" value="1"/>
</dbReference>
<dbReference type="PIRSF" id="PIRSF000532">
    <property type="entry name" value="ATP_PFK_prok"/>
    <property type="match status" value="1"/>
</dbReference>
<dbReference type="PRINTS" id="PR00476">
    <property type="entry name" value="PHFRCTKINASE"/>
</dbReference>
<dbReference type="SUPFAM" id="SSF53784">
    <property type="entry name" value="Phosphofructokinase"/>
    <property type="match status" value="1"/>
</dbReference>
<dbReference type="PROSITE" id="PS00433">
    <property type="entry name" value="PHOSPHOFRUCTOKINASE"/>
    <property type="match status" value="1"/>
</dbReference>
<protein>
    <recommendedName>
        <fullName evidence="1">ATP-dependent 6-phosphofructokinase</fullName>
        <shortName evidence="1">ATP-PFK</shortName>
        <shortName evidence="1">Phosphofructokinase</shortName>
        <ecNumber evidence="1">2.7.1.11</ecNumber>
    </recommendedName>
    <alternativeName>
        <fullName evidence="1">Phosphohexokinase</fullName>
    </alternativeName>
</protein>
<proteinExistence type="inferred from homology"/>
<feature type="chain" id="PRO_1000059805" description="ATP-dependent 6-phosphofructokinase">
    <location>
        <begin position="1"/>
        <end position="319"/>
    </location>
</feature>
<feature type="active site" description="Proton acceptor" evidence="1">
    <location>
        <position position="128"/>
    </location>
</feature>
<feature type="binding site" evidence="1">
    <location>
        <position position="11"/>
    </location>
    <ligand>
        <name>ATP</name>
        <dbReference type="ChEBI" id="CHEBI:30616"/>
    </ligand>
</feature>
<feature type="binding site" evidence="1">
    <location>
        <begin position="21"/>
        <end position="25"/>
    </location>
    <ligand>
        <name>ADP</name>
        <dbReference type="ChEBI" id="CHEBI:456216"/>
        <note>allosteric activator; ligand shared between dimeric partners</note>
    </ligand>
</feature>
<feature type="binding site" evidence="1">
    <location>
        <begin position="72"/>
        <end position="73"/>
    </location>
    <ligand>
        <name>ATP</name>
        <dbReference type="ChEBI" id="CHEBI:30616"/>
    </ligand>
</feature>
<feature type="binding site" evidence="1">
    <location>
        <begin position="102"/>
        <end position="105"/>
    </location>
    <ligand>
        <name>ATP</name>
        <dbReference type="ChEBI" id="CHEBI:30616"/>
    </ligand>
</feature>
<feature type="binding site" evidence="1">
    <location>
        <position position="103"/>
    </location>
    <ligand>
        <name>Mg(2+)</name>
        <dbReference type="ChEBI" id="CHEBI:18420"/>
        <note>catalytic</note>
    </ligand>
</feature>
<feature type="binding site" description="in other chain" evidence="1">
    <location>
        <begin position="126"/>
        <end position="128"/>
    </location>
    <ligand>
        <name>substrate</name>
        <note>ligand shared between dimeric partners</note>
    </ligand>
</feature>
<feature type="binding site" description="in other chain" evidence="1">
    <location>
        <position position="155"/>
    </location>
    <ligand>
        <name>ADP</name>
        <dbReference type="ChEBI" id="CHEBI:456216"/>
        <note>allosteric activator; ligand shared between dimeric partners</note>
    </ligand>
</feature>
<feature type="binding site" evidence="1">
    <location>
        <position position="163"/>
    </location>
    <ligand>
        <name>substrate</name>
        <note>ligand shared between dimeric partners</note>
    </ligand>
</feature>
<feature type="binding site" description="in other chain" evidence="1">
    <location>
        <begin position="170"/>
        <end position="172"/>
    </location>
    <ligand>
        <name>substrate</name>
        <note>ligand shared between dimeric partners</note>
    </ligand>
</feature>
<feature type="binding site" description="in other chain" evidence="1">
    <location>
        <begin position="186"/>
        <end position="188"/>
    </location>
    <ligand>
        <name>ADP</name>
        <dbReference type="ChEBI" id="CHEBI:456216"/>
        <note>allosteric activator; ligand shared between dimeric partners</note>
    </ligand>
</feature>
<feature type="binding site" description="in other chain" evidence="1">
    <location>
        <position position="212"/>
    </location>
    <ligand>
        <name>ADP</name>
        <dbReference type="ChEBI" id="CHEBI:456216"/>
        <note>allosteric activator; ligand shared between dimeric partners</note>
    </ligand>
</feature>
<feature type="binding site" description="in other chain" evidence="1">
    <location>
        <begin position="214"/>
        <end position="216"/>
    </location>
    <ligand>
        <name>ADP</name>
        <dbReference type="ChEBI" id="CHEBI:456216"/>
        <note>allosteric activator; ligand shared between dimeric partners</note>
    </ligand>
</feature>
<feature type="binding site" description="in other chain" evidence="1">
    <location>
        <position position="223"/>
    </location>
    <ligand>
        <name>substrate</name>
        <note>ligand shared between dimeric partners</note>
    </ligand>
</feature>
<feature type="binding site" evidence="1">
    <location>
        <position position="244"/>
    </location>
    <ligand>
        <name>substrate</name>
        <note>ligand shared between dimeric partners</note>
    </ligand>
</feature>
<feature type="binding site" description="in other chain" evidence="1">
    <location>
        <begin position="250"/>
        <end position="253"/>
    </location>
    <ligand>
        <name>substrate</name>
        <note>ligand shared between dimeric partners</note>
    </ligand>
</feature>
<accession>A5IKL2</accession>